<comment type="function">
    <text evidence="4 5 6">Required for homeostasis of heavy metal ions such as cadmium, cobalt and copper. Controls metal ion transport and prevents metal hyperaccumulation by negatively regulating the SMF1 and SMF2 metal transport systems. Under manganese-replete conditions facilitates trafficking of SMF1 and SMF2 metal transporters to the vacuole where they are degraded.</text>
</comment>
<comment type="subcellular location">
    <subcellularLocation>
        <location>Endoplasmic reticulum</location>
    </subcellularLocation>
    <subcellularLocation>
        <location>Vacuole</location>
    </subcellularLocation>
    <subcellularLocation>
        <location>Membrane</location>
        <topology>Multi-pass membrane protein</topology>
    </subcellularLocation>
</comment>
<comment type="disruption phenotype">
    <text evidence="4 5 6">Increased accumulation of copper, cadmium and cobalt ions and enhanced sensitivity to the toxic effects of copper and cadmium. Exhibits no additional sensitivity to manganese. SMF1 fails to enter the vacuole and is stabilized. Reverses the aerobic defects of yeast strains lacking superoxide dismutase (SOD). Concomitant deletion of SMF1 completely abolishes the ability of BSD2 deletion to suppress SOD deficiency and reverses the increased sensitivity to cadmium and copper. However cobalt ion hyperaccumulation is not suppressed.</text>
</comment>
<comment type="miscellaneous">
    <text evidence="3">Present with 3070 molecules/cell in log phase SD medium.</text>
</comment>
<comment type="similarity">
    <text evidence="7">Belongs to the BSD2 family.</text>
</comment>
<sequence>MPEQELLIGQEMNTLHAGSSTDGINVGNAGRTRDTQTGVEGETEIGSDEEDSIEDEGSSSGGNSTTERLVPHQLREQAARHIGKIGRHFNILDRLFKKRTQQSSDIQQGAMFDGVFSNLSAKPDTTETEGNNEQDIPPTYDEAAADMAPSYYGMDLNNSDIYYDEICIEGLPVGNIANLLWNIIVSTSFQFIGFLITYILHTSHAAKQGSRFGLGLTFIGYGYSMIPNDVTSKVGKNKSLNRMELEDPNEFDDVRLNSQSTTQDKFESHLNHGLDEEKQNIPWLAVFVAFLGLFITLKSIYDYIQVKKLEKKYLNQSQNQA</sequence>
<evidence type="ECO:0000255" key="1"/>
<evidence type="ECO:0000256" key="2">
    <source>
        <dbReference type="SAM" id="MobiDB-lite"/>
    </source>
</evidence>
<evidence type="ECO:0000269" key="3">
    <source>
    </source>
</evidence>
<evidence type="ECO:0000269" key="4">
    <source>
    </source>
</evidence>
<evidence type="ECO:0000269" key="5">
    <source>
    </source>
</evidence>
<evidence type="ECO:0000269" key="6">
    <source>
    </source>
</evidence>
<evidence type="ECO:0000305" key="7"/>
<evidence type="ECO:0007744" key="8">
    <source>
    </source>
</evidence>
<reference key="1">
    <citation type="journal article" date="1994" name="Mol. Cell. Biol.">
        <title>The requirement for yeast superoxide dismutase is bypassed through mutations in BSD2, a novel metal homeostasis gene.</title>
        <authorList>
            <person name="Liu X.F."/>
            <person name="Culotta V.C."/>
        </authorList>
    </citation>
    <scope>NUCLEOTIDE SEQUENCE [GENOMIC DNA]</scope>
    <scope>FUNCTION</scope>
    <scope>DISRUPTION PHENOTYPE</scope>
    <scope>MUTAGENESIS OF PRO-149</scope>
</reference>
<reference key="2">
    <citation type="journal article" date="1994" name="Yeast">
        <title>The sequence of a 32,420 bp segment located on the right arm of chromosome II from Saccharomyces cerevisiae.</title>
        <authorList>
            <person name="Holmstroem K."/>
            <person name="Brandt T."/>
            <person name="Kallesoe T."/>
        </authorList>
    </citation>
    <scope>NUCLEOTIDE SEQUENCE [GENOMIC DNA]</scope>
    <source>
        <strain>ATCC 204508 / S288c</strain>
    </source>
</reference>
<reference key="3">
    <citation type="journal article" date="1994" name="EMBO J.">
        <title>Complete DNA sequence of yeast chromosome II.</title>
        <authorList>
            <person name="Feldmann H."/>
            <person name="Aigle M."/>
            <person name="Aljinovic G."/>
            <person name="Andre B."/>
            <person name="Baclet M.C."/>
            <person name="Barthe C."/>
            <person name="Baur A."/>
            <person name="Becam A.-M."/>
            <person name="Biteau N."/>
            <person name="Boles E."/>
            <person name="Brandt T."/>
            <person name="Brendel M."/>
            <person name="Brueckner M."/>
            <person name="Bussereau F."/>
            <person name="Christiansen C."/>
            <person name="Contreras R."/>
            <person name="Crouzet M."/>
            <person name="Cziepluch C."/>
            <person name="Demolis N."/>
            <person name="Delaveau T."/>
            <person name="Doignon F."/>
            <person name="Domdey H."/>
            <person name="Duesterhus S."/>
            <person name="Dubois E."/>
            <person name="Dujon B."/>
            <person name="El Bakkoury M."/>
            <person name="Entian K.-D."/>
            <person name="Feuermann M."/>
            <person name="Fiers W."/>
            <person name="Fobo G.M."/>
            <person name="Fritz C."/>
            <person name="Gassenhuber J."/>
            <person name="Glansdorff N."/>
            <person name="Goffeau A."/>
            <person name="Grivell L.A."/>
            <person name="de Haan M."/>
            <person name="Hein C."/>
            <person name="Herbert C.J."/>
            <person name="Hollenberg C.P."/>
            <person name="Holmstroem K."/>
            <person name="Jacq C."/>
            <person name="Jacquet M."/>
            <person name="Jauniaux J.-C."/>
            <person name="Jonniaux J.-L."/>
            <person name="Kallesoee T."/>
            <person name="Kiesau P."/>
            <person name="Kirchrath L."/>
            <person name="Koetter P."/>
            <person name="Korol S."/>
            <person name="Liebl S."/>
            <person name="Logghe M."/>
            <person name="Lohan A.J.E."/>
            <person name="Louis E.J."/>
            <person name="Li Z.Y."/>
            <person name="Maat M.J."/>
            <person name="Mallet L."/>
            <person name="Mannhaupt G."/>
            <person name="Messenguy F."/>
            <person name="Miosga T."/>
            <person name="Molemans F."/>
            <person name="Mueller S."/>
            <person name="Nasr F."/>
            <person name="Obermaier B."/>
            <person name="Perea J."/>
            <person name="Pierard A."/>
            <person name="Piravandi E."/>
            <person name="Pohl F.M."/>
            <person name="Pohl T.M."/>
            <person name="Potier S."/>
            <person name="Proft M."/>
            <person name="Purnelle B."/>
            <person name="Ramezani Rad M."/>
            <person name="Rieger M."/>
            <person name="Rose M."/>
            <person name="Schaaff-Gerstenschlaeger I."/>
            <person name="Scherens B."/>
            <person name="Schwarzlose C."/>
            <person name="Skala J."/>
            <person name="Slonimski P.P."/>
            <person name="Smits P.H.M."/>
            <person name="Souciet J.-L."/>
            <person name="Steensma H.Y."/>
            <person name="Stucka R."/>
            <person name="Urrestarazu L.A."/>
            <person name="van der Aart Q.J.M."/>
            <person name="Van Dyck L."/>
            <person name="Vassarotti A."/>
            <person name="Vetter I."/>
            <person name="Vierendeels F."/>
            <person name="Vissers S."/>
            <person name="Wagner G."/>
            <person name="de Wergifosse P."/>
            <person name="Wolfe K.H."/>
            <person name="Zagulski M."/>
            <person name="Zimmermann F.K."/>
            <person name="Mewes H.-W."/>
            <person name="Kleine K."/>
        </authorList>
    </citation>
    <scope>NUCLEOTIDE SEQUENCE [LARGE SCALE GENOMIC DNA]</scope>
    <source>
        <strain>ATCC 204508 / S288c</strain>
    </source>
</reference>
<reference key="4">
    <citation type="journal article" date="2014" name="G3 (Bethesda)">
        <title>The reference genome sequence of Saccharomyces cerevisiae: Then and now.</title>
        <authorList>
            <person name="Engel S.R."/>
            <person name="Dietrich F.S."/>
            <person name="Fisk D.G."/>
            <person name="Binkley G."/>
            <person name="Balakrishnan R."/>
            <person name="Costanzo M.C."/>
            <person name="Dwight S.S."/>
            <person name="Hitz B.C."/>
            <person name="Karra K."/>
            <person name="Nash R.S."/>
            <person name="Weng S."/>
            <person name="Wong E.D."/>
            <person name="Lloyd P."/>
            <person name="Skrzypek M.S."/>
            <person name="Miyasato S.R."/>
            <person name="Simison M."/>
            <person name="Cherry J.M."/>
        </authorList>
    </citation>
    <scope>GENOME REANNOTATION</scope>
    <source>
        <strain>ATCC 204508 / S288c</strain>
    </source>
</reference>
<reference key="5">
    <citation type="journal article" date="1997" name="J. Biol. Chem.">
        <title>Negative control of heavy metal uptake by the Saccharomyces cerevisiae BSD2 gene.</title>
        <authorList>
            <person name="Liu X.F."/>
            <person name="Supek F."/>
            <person name="Nelson N."/>
            <person name="Culotta V.C."/>
        </authorList>
    </citation>
    <scope>FUNCTION</scope>
    <scope>SUBCELLULAR LOCATION</scope>
    <scope>DISRUPTION PHENOTYPE</scope>
</reference>
<reference key="6">
    <citation type="journal article" date="1999" name="J. Biol. Chem.">
        <title>Post-translation control of Nramp metal transport in yeast. Role of metal ions and the BSD2 gene.</title>
        <authorList>
            <person name="Liu X.F."/>
            <person name="Culotta V.C."/>
        </authorList>
    </citation>
    <scope>FUNCTION</scope>
    <scope>DISRUPTION PHENOTYPE</scope>
</reference>
<reference key="7">
    <citation type="journal article" date="2003" name="Nature">
        <title>Global analysis of protein localization in budding yeast.</title>
        <authorList>
            <person name="Huh W.-K."/>
            <person name="Falvo J.V."/>
            <person name="Gerke L.C."/>
            <person name="Carroll A.S."/>
            <person name="Howson R.W."/>
            <person name="Weissman J.S."/>
            <person name="O'Shea E.K."/>
        </authorList>
    </citation>
    <scope>SUBCELLULAR LOCATION [LARGE SCALE ANALYSIS]</scope>
</reference>
<reference key="8">
    <citation type="journal article" date="2003" name="Nature">
        <title>Global analysis of protein expression in yeast.</title>
        <authorList>
            <person name="Ghaemmaghami S."/>
            <person name="Huh W.-K."/>
            <person name="Bower K."/>
            <person name="Howson R.W."/>
            <person name="Belle A."/>
            <person name="Dephoure N."/>
            <person name="O'Shea E.K."/>
            <person name="Weissman J.S."/>
        </authorList>
    </citation>
    <scope>LEVEL OF PROTEIN EXPRESSION [LARGE SCALE ANALYSIS]</scope>
</reference>
<reference key="9">
    <citation type="journal article" date="2003" name="Nat. Biotechnol.">
        <title>A proteomics approach to understanding protein ubiquitination.</title>
        <authorList>
            <person name="Peng J."/>
            <person name="Schwartz D."/>
            <person name="Elias J.E."/>
            <person name="Thoreen C.C."/>
            <person name="Cheng D."/>
            <person name="Marsischky G."/>
            <person name="Roelofs J."/>
            <person name="Finley D."/>
            <person name="Gygi S.P."/>
        </authorList>
    </citation>
    <scope>UBIQUITINATION [LARGE SCALE ANALYSIS] AT LYS-312</scope>
    <scope>IDENTIFICATION BY MASS SPECTROMETRY</scope>
    <source>
        <strain>SUB592</strain>
    </source>
</reference>
<reference key="10">
    <citation type="journal article" date="2006" name="Proc. Natl. Acad. Sci. U.S.A.">
        <title>A global topology map of the Saccharomyces cerevisiae membrane proteome.</title>
        <authorList>
            <person name="Kim H."/>
            <person name="Melen K."/>
            <person name="Oesterberg M."/>
            <person name="von Heijne G."/>
        </authorList>
    </citation>
    <scope>TOPOLOGY [LARGE SCALE ANALYSIS]</scope>
    <source>
        <strain>ATCC 208353 / W303-1A</strain>
    </source>
</reference>
<reference key="11">
    <citation type="journal article" date="2008" name="Mol. Cell. Proteomics">
        <title>A multidimensional chromatography technology for in-depth phosphoproteome analysis.</title>
        <authorList>
            <person name="Albuquerque C.P."/>
            <person name="Smolka M.B."/>
            <person name="Payne S.H."/>
            <person name="Bafna V."/>
            <person name="Eng J."/>
            <person name="Zhou H."/>
        </authorList>
    </citation>
    <scope>IDENTIFICATION BY MASS SPECTROMETRY [LARGE SCALE ANALYSIS]</scope>
</reference>
<reference key="12">
    <citation type="journal article" date="2012" name="Proteomics">
        <title>Sites of ubiquitin attachment in Saccharomyces cerevisiae.</title>
        <authorList>
            <person name="Starita L.M."/>
            <person name="Lo R.S."/>
            <person name="Eng J.K."/>
            <person name="von Haller P.D."/>
            <person name="Fields S."/>
        </authorList>
    </citation>
    <scope>UBIQUITINATION [LARGE SCALE ANALYSIS] AT LYS-312</scope>
    <scope>IDENTIFICATION BY MASS SPECTROMETRY [LARGE SCALE ANALYSIS]</scope>
</reference>
<dbReference type="EMBL" id="L33783">
    <property type="protein sequence ID" value="AAA65065.1"/>
    <property type="molecule type" value="Genomic_DNA"/>
</dbReference>
<dbReference type="EMBL" id="X76053">
    <property type="protein sequence ID" value="CAA53653.1"/>
    <property type="molecule type" value="Genomic_DNA"/>
</dbReference>
<dbReference type="EMBL" id="Z36159">
    <property type="protein sequence ID" value="CAA85255.1"/>
    <property type="molecule type" value="Genomic_DNA"/>
</dbReference>
<dbReference type="EMBL" id="BK006936">
    <property type="protein sequence ID" value="DAA07405.1"/>
    <property type="molecule type" value="Genomic_DNA"/>
</dbReference>
<dbReference type="PIR" id="S44552">
    <property type="entry name" value="S44552"/>
</dbReference>
<dbReference type="RefSeq" id="NP_009849.1">
    <property type="nucleotide sequence ID" value="NM_001178638.1"/>
</dbReference>
<dbReference type="SMR" id="P38356"/>
<dbReference type="BioGRID" id="32984">
    <property type="interactions" value="215"/>
</dbReference>
<dbReference type="DIP" id="DIP-7753N"/>
<dbReference type="FunCoup" id="P38356">
    <property type="interactions" value="76"/>
</dbReference>
<dbReference type="IntAct" id="P38356">
    <property type="interactions" value="39"/>
</dbReference>
<dbReference type="MINT" id="P38356"/>
<dbReference type="STRING" id="4932.YBR290W"/>
<dbReference type="TCDB" id="8.A.30.2.1">
    <property type="family name" value="the nedd4-family interacting protein-2 (nedd4) family"/>
</dbReference>
<dbReference type="iPTMnet" id="P38356"/>
<dbReference type="PaxDb" id="4932-YBR290W"/>
<dbReference type="PeptideAtlas" id="P38356"/>
<dbReference type="EnsemblFungi" id="YBR290W_mRNA">
    <property type="protein sequence ID" value="YBR290W"/>
    <property type="gene ID" value="YBR290W"/>
</dbReference>
<dbReference type="GeneID" id="852593"/>
<dbReference type="KEGG" id="sce:YBR290W"/>
<dbReference type="AGR" id="SGD:S000000494"/>
<dbReference type="SGD" id="S000000494">
    <property type="gene designation" value="BSD2"/>
</dbReference>
<dbReference type="VEuPathDB" id="FungiDB:YBR290W"/>
<dbReference type="eggNOG" id="KOG4812">
    <property type="taxonomic scope" value="Eukaryota"/>
</dbReference>
<dbReference type="GeneTree" id="ENSGT00390000012721"/>
<dbReference type="HOGENOM" id="CLU_041193_2_0_1"/>
<dbReference type="InParanoid" id="P38356"/>
<dbReference type="OMA" id="YNEICID"/>
<dbReference type="OrthoDB" id="10003116at2759"/>
<dbReference type="BioCyc" id="YEAST:G3O-29209-MONOMER"/>
<dbReference type="BioGRID-ORCS" id="852593">
    <property type="hits" value="9 hits in 10 CRISPR screens"/>
</dbReference>
<dbReference type="PRO" id="PR:P38356"/>
<dbReference type="Proteomes" id="UP000002311">
    <property type="component" value="Chromosome II"/>
</dbReference>
<dbReference type="RNAct" id="P38356">
    <property type="molecule type" value="protein"/>
</dbReference>
<dbReference type="GO" id="GO:0005783">
    <property type="term" value="C:endoplasmic reticulum"/>
    <property type="evidence" value="ECO:0000314"/>
    <property type="project" value="SGD"/>
</dbReference>
<dbReference type="GO" id="GO:0000324">
    <property type="term" value="C:fungal-type vacuole"/>
    <property type="evidence" value="ECO:0000314"/>
    <property type="project" value="SGD"/>
</dbReference>
<dbReference type="GO" id="GO:0000329">
    <property type="term" value="C:fungal-type vacuole membrane"/>
    <property type="evidence" value="ECO:0000314"/>
    <property type="project" value="SGD"/>
</dbReference>
<dbReference type="GO" id="GO:0005794">
    <property type="term" value="C:Golgi apparatus"/>
    <property type="evidence" value="ECO:0000318"/>
    <property type="project" value="GO_Central"/>
</dbReference>
<dbReference type="GO" id="GO:0048471">
    <property type="term" value="C:perinuclear region of cytoplasm"/>
    <property type="evidence" value="ECO:0000318"/>
    <property type="project" value="GO_Central"/>
</dbReference>
<dbReference type="GO" id="GO:0030001">
    <property type="term" value="P:metal ion transport"/>
    <property type="evidence" value="ECO:0000315"/>
    <property type="project" value="SGD"/>
</dbReference>
<dbReference type="GO" id="GO:0031398">
    <property type="term" value="P:positive regulation of protein ubiquitination"/>
    <property type="evidence" value="ECO:0000318"/>
    <property type="project" value="GO_Central"/>
</dbReference>
<dbReference type="GO" id="GO:0006623">
    <property type="term" value="P:protein targeting to vacuole"/>
    <property type="evidence" value="ECO:0000315"/>
    <property type="project" value="SGD"/>
</dbReference>
<dbReference type="GO" id="GO:0006511">
    <property type="term" value="P:ubiquitin-dependent protein catabolic process"/>
    <property type="evidence" value="ECO:0000315"/>
    <property type="project" value="SGD"/>
</dbReference>
<dbReference type="CDD" id="cd22212">
    <property type="entry name" value="NDFIP-like"/>
    <property type="match status" value="1"/>
</dbReference>
<dbReference type="InterPro" id="IPR019325">
    <property type="entry name" value="NEDD4/Bsd2"/>
</dbReference>
<dbReference type="PANTHER" id="PTHR13396:SF5">
    <property type="entry name" value="NEDD4 FAMILY INTERACTING PROTEIN"/>
    <property type="match status" value="1"/>
</dbReference>
<dbReference type="PANTHER" id="PTHR13396">
    <property type="entry name" value="NEDD4 FAMILY INTERACTING PROTEIN 1/2"/>
    <property type="match status" value="1"/>
</dbReference>
<dbReference type="Pfam" id="PF10176">
    <property type="entry name" value="NEDD4_Bsd2"/>
    <property type="match status" value="1"/>
</dbReference>
<accession>P38356</accession>
<accession>D6VQT5</accession>
<proteinExistence type="evidence at protein level"/>
<keyword id="KW-0256">Endoplasmic reticulum</keyword>
<keyword id="KW-1017">Isopeptide bond</keyword>
<keyword id="KW-0472">Membrane</keyword>
<keyword id="KW-1185">Reference proteome</keyword>
<keyword id="KW-0346">Stress response</keyword>
<keyword id="KW-0812">Transmembrane</keyword>
<keyword id="KW-1133">Transmembrane helix</keyword>
<keyword id="KW-0813">Transport</keyword>
<keyword id="KW-0832">Ubl conjugation</keyword>
<keyword id="KW-0926">Vacuole</keyword>
<protein>
    <recommendedName>
        <fullName>Metal homeostatis protein BSD2</fullName>
    </recommendedName>
    <alternativeName>
        <fullName>Bypass SOD defects protein 2</fullName>
    </alternativeName>
</protein>
<feature type="chain" id="PRO_0000064996" description="Metal homeostatis protein BSD2">
    <location>
        <begin position="1"/>
        <end position="321"/>
    </location>
</feature>
<feature type="topological domain" description="Extracellular" evidence="1">
    <location>
        <begin position="1"/>
        <end position="178"/>
    </location>
</feature>
<feature type="transmembrane region" description="Helical" evidence="1">
    <location>
        <begin position="179"/>
        <end position="199"/>
    </location>
</feature>
<feature type="topological domain" description="Cytoplasmic" evidence="1">
    <location>
        <begin position="200"/>
        <end position="211"/>
    </location>
</feature>
<feature type="transmembrane region" description="Helical" evidence="1">
    <location>
        <begin position="212"/>
        <end position="232"/>
    </location>
</feature>
<feature type="topological domain" description="Extracellular" evidence="1">
    <location>
        <begin position="233"/>
        <end position="280"/>
    </location>
</feature>
<feature type="transmembrane region" description="Helical" evidence="1">
    <location>
        <begin position="281"/>
        <end position="301"/>
    </location>
</feature>
<feature type="topological domain" description="Cytoplasmic" evidence="1">
    <location>
        <begin position="302"/>
        <end position="321"/>
    </location>
</feature>
<feature type="region of interest" description="Disordered" evidence="2">
    <location>
        <begin position="1"/>
        <end position="71"/>
    </location>
</feature>
<feature type="compositionally biased region" description="Polar residues" evidence="2">
    <location>
        <begin position="11"/>
        <end position="23"/>
    </location>
</feature>
<feature type="compositionally biased region" description="Acidic residues" evidence="2">
    <location>
        <begin position="41"/>
        <end position="57"/>
    </location>
</feature>
<feature type="cross-link" description="Glycyl lysine isopeptide (Lys-Gly) (interchain with G-Cter in ubiquitin)" evidence="8">
    <location>
        <position position="312"/>
    </location>
</feature>
<feature type="mutagenesis site" description="Reverses the aerobic defects of yeast strains lacking superoxide dismutase (SOD). Associated with elevated copper ion accumulation and increased sensitivity to the toxic effects of copper and cadmium. Exhibits no additional sensitivity to manganese." evidence="4">
    <original>P</original>
    <variation>S</variation>
    <location>
        <position position="149"/>
    </location>
</feature>
<gene>
    <name type="primary">BSD2</name>
    <name type="ordered locus">YBR290W</name>
    <name type="ORF">YBR2037</name>
</gene>
<organism>
    <name type="scientific">Saccharomyces cerevisiae (strain ATCC 204508 / S288c)</name>
    <name type="common">Baker's yeast</name>
    <dbReference type="NCBI Taxonomy" id="559292"/>
    <lineage>
        <taxon>Eukaryota</taxon>
        <taxon>Fungi</taxon>
        <taxon>Dikarya</taxon>
        <taxon>Ascomycota</taxon>
        <taxon>Saccharomycotina</taxon>
        <taxon>Saccharomycetes</taxon>
        <taxon>Saccharomycetales</taxon>
        <taxon>Saccharomycetaceae</taxon>
        <taxon>Saccharomyces</taxon>
    </lineage>
</organism>
<name>BSD2_YEAST</name>